<accession>B0Y708</accession>
<reference key="1">
    <citation type="journal article" date="2008" name="PLoS Genet.">
        <title>Genomic islands in the pathogenic filamentous fungus Aspergillus fumigatus.</title>
        <authorList>
            <person name="Fedorova N.D."/>
            <person name="Khaldi N."/>
            <person name="Joardar V.S."/>
            <person name="Maiti R."/>
            <person name="Amedeo P."/>
            <person name="Anderson M.J."/>
            <person name="Crabtree J."/>
            <person name="Silva J.C."/>
            <person name="Badger J.H."/>
            <person name="Albarraq A."/>
            <person name="Angiuoli S."/>
            <person name="Bussey H."/>
            <person name="Bowyer P."/>
            <person name="Cotty P.J."/>
            <person name="Dyer P.S."/>
            <person name="Egan A."/>
            <person name="Galens K."/>
            <person name="Fraser-Liggett C.M."/>
            <person name="Haas B.J."/>
            <person name="Inman J.M."/>
            <person name="Kent R."/>
            <person name="Lemieux S."/>
            <person name="Malavazi I."/>
            <person name="Orvis J."/>
            <person name="Roemer T."/>
            <person name="Ronning C.M."/>
            <person name="Sundaram J.P."/>
            <person name="Sutton G."/>
            <person name="Turner G."/>
            <person name="Venter J.C."/>
            <person name="White O.R."/>
            <person name="Whitty B.R."/>
            <person name="Youngman P."/>
            <person name="Wolfe K.H."/>
            <person name="Goldman G.H."/>
            <person name="Wortman J.R."/>
            <person name="Jiang B."/>
            <person name="Denning D.W."/>
            <person name="Nierman W.C."/>
        </authorList>
    </citation>
    <scope>NUCLEOTIDE SEQUENCE [LARGE SCALE GENOMIC DNA]</scope>
    <source>
        <strain>CBS 144.89 / FGSC A1163 / CEA10</strain>
    </source>
</reference>
<evidence type="ECO:0000250" key="1"/>
<evidence type="ECO:0000255" key="2"/>
<evidence type="ECO:0000255" key="3">
    <source>
        <dbReference type="PROSITE-ProRule" id="PRU01240"/>
    </source>
</evidence>
<evidence type="ECO:0000305" key="4"/>
<dbReference type="EC" id="3.4.21.63"/>
<dbReference type="EMBL" id="DS499598">
    <property type="protein sequence ID" value="EDP50543.1"/>
    <property type="molecule type" value="Genomic_DNA"/>
</dbReference>
<dbReference type="SMR" id="B0Y708"/>
<dbReference type="Allergome" id="66">
    <property type="allergen name" value="Asp f 13"/>
</dbReference>
<dbReference type="MEROPS" id="S08.053"/>
<dbReference type="GlyCosmos" id="B0Y708">
    <property type="glycosylation" value="3 sites, No reported glycans"/>
</dbReference>
<dbReference type="EnsemblFungi" id="EDP50543">
    <property type="protein sequence ID" value="EDP50543"/>
    <property type="gene ID" value="AFUB_068800"/>
</dbReference>
<dbReference type="VEuPathDB" id="FungiDB:AFUB_068800"/>
<dbReference type="HOGENOM" id="CLU_011263_1_4_1"/>
<dbReference type="OrthoDB" id="83080at5052"/>
<dbReference type="PhylomeDB" id="B0Y708"/>
<dbReference type="Proteomes" id="UP000001699">
    <property type="component" value="Unassembled WGS sequence"/>
</dbReference>
<dbReference type="GO" id="GO:0005576">
    <property type="term" value="C:extracellular region"/>
    <property type="evidence" value="ECO:0007669"/>
    <property type="project" value="UniProtKB-SubCell"/>
</dbReference>
<dbReference type="GO" id="GO:0004252">
    <property type="term" value="F:serine-type endopeptidase activity"/>
    <property type="evidence" value="ECO:0007669"/>
    <property type="project" value="InterPro"/>
</dbReference>
<dbReference type="GO" id="GO:0006508">
    <property type="term" value="P:proteolysis"/>
    <property type="evidence" value="ECO:0007669"/>
    <property type="project" value="UniProtKB-KW"/>
</dbReference>
<dbReference type="CDD" id="cd04077">
    <property type="entry name" value="Peptidases_S8_PCSK9_ProteinaseK_like"/>
    <property type="match status" value="1"/>
</dbReference>
<dbReference type="FunFam" id="3.30.70.80:FF:000008">
    <property type="entry name" value="Alkaline protease 1"/>
    <property type="match status" value="1"/>
</dbReference>
<dbReference type="FunFam" id="3.40.50.200:FF:000014">
    <property type="entry name" value="Proteinase K"/>
    <property type="match status" value="1"/>
</dbReference>
<dbReference type="Gene3D" id="3.30.70.80">
    <property type="entry name" value="Peptidase S8 propeptide/proteinase inhibitor I9"/>
    <property type="match status" value="1"/>
</dbReference>
<dbReference type="Gene3D" id="3.40.50.200">
    <property type="entry name" value="Peptidase S8/S53 domain"/>
    <property type="match status" value="1"/>
</dbReference>
<dbReference type="InterPro" id="IPR034193">
    <property type="entry name" value="PCSK9_ProteinaseK-like"/>
</dbReference>
<dbReference type="InterPro" id="IPR000209">
    <property type="entry name" value="Peptidase_S8/S53_dom"/>
</dbReference>
<dbReference type="InterPro" id="IPR036852">
    <property type="entry name" value="Peptidase_S8/S53_dom_sf"/>
</dbReference>
<dbReference type="InterPro" id="IPR023827">
    <property type="entry name" value="Peptidase_S8_Asp-AS"/>
</dbReference>
<dbReference type="InterPro" id="IPR022398">
    <property type="entry name" value="Peptidase_S8_His-AS"/>
</dbReference>
<dbReference type="InterPro" id="IPR023828">
    <property type="entry name" value="Peptidase_S8_Ser-AS"/>
</dbReference>
<dbReference type="InterPro" id="IPR050131">
    <property type="entry name" value="Peptidase_S8_subtilisin-like"/>
</dbReference>
<dbReference type="InterPro" id="IPR015500">
    <property type="entry name" value="Peptidase_S8_subtilisin-rel"/>
</dbReference>
<dbReference type="InterPro" id="IPR010259">
    <property type="entry name" value="S8pro/Inhibitor_I9"/>
</dbReference>
<dbReference type="InterPro" id="IPR037045">
    <property type="entry name" value="S8pro/Inhibitor_I9_sf"/>
</dbReference>
<dbReference type="PANTHER" id="PTHR43806:SF58">
    <property type="entry name" value="ALKALINE PROTEASE 1-RELATED"/>
    <property type="match status" value="1"/>
</dbReference>
<dbReference type="PANTHER" id="PTHR43806">
    <property type="entry name" value="PEPTIDASE S8"/>
    <property type="match status" value="1"/>
</dbReference>
<dbReference type="Pfam" id="PF05922">
    <property type="entry name" value="Inhibitor_I9"/>
    <property type="match status" value="1"/>
</dbReference>
<dbReference type="Pfam" id="PF00082">
    <property type="entry name" value="Peptidase_S8"/>
    <property type="match status" value="1"/>
</dbReference>
<dbReference type="PRINTS" id="PR00723">
    <property type="entry name" value="SUBTILISIN"/>
</dbReference>
<dbReference type="SUPFAM" id="SSF54897">
    <property type="entry name" value="Protease propeptides/inhibitors"/>
    <property type="match status" value="1"/>
</dbReference>
<dbReference type="SUPFAM" id="SSF52743">
    <property type="entry name" value="Subtilisin-like"/>
    <property type="match status" value="1"/>
</dbReference>
<dbReference type="PROSITE" id="PS51892">
    <property type="entry name" value="SUBTILASE"/>
    <property type="match status" value="1"/>
</dbReference>
<dbReference type="PROSITE" id="PS00136">
    <property type="entry name" value="SUBTILASE_ASP"/>
    <property type="match status" value="1"/>
</dbReference>
<dbReference type="PROSITE" id="PS00137">
    <property type="entry name" value="SUBTILASE_HIS"/>
    <property type="match status" value="1"/>
</dbReference>
<dbReference type="PROSITE" id="PS00138">
    <property type="entry name" value="SUBTILASE_SER"/>
    <property type="match status" value="1"/>
</dbReference>
<gene>
    <name type="primary">alp1</name>
    <name type="synonym">alk1</name>
    <name type="synonym">alp</name>
    <name type="ORF">AFUB_068800</name>
</gene>
<protein>
    <recommendedName>
        <fullName>Alkaline protease 1</fullName>
        <shortName>ALP</shortName>
        <ecNumber>3.4.21.63</ecNumber>
    </recommendedName>
    <alternativeName>
        <fullName>Aspergillopeptidase B</fullName>
    </alternativeName>
    <alternativeName>
        <fullName>Aspergillus proteinase B</fullName>
    </alternativeName>
    <alternativeName>
        <fullName>Elastase</fullName>
    </alternativeName>
    <alternativeName>
        <fullName>Elastinolytic serine proteinase</fullName>
    </alternativeName>
    <alternativeName>
        <fullName>Oryzin</fullName>
    </alternativeName>
</protein>
<sequence length="403" mass="42190">MLSIKRTLLLLGAVLPAVFGAPVQETRRAAQKIPGKYIVTFKPGTDTATIESHTLWATDLHKRNLERRDTTSGEPPVGIEKSYKIKDFAAYAGSFDDATIEEIRKSADVAHVEEDQIWYLDALTTQKGAPWGLGSISHKGQASTDYIYDTSAGAGTYAYVVDSGINVNHVEFESRASLAYNAAGGSHVDSIGHGTHVAGTIGGKTYGVAKKTNLLSVKVFQGESSSTSIILDGFNWAVNDIVSKGRTKKAAINMSLGGGYSYAFNNAVENAFDEGVLSVVAAGNENSDASNTSPASAPNALTVAAINKSNARASFSNYGSVVDIFAPGQDILSAWIGSTTATNTISGTSMATPHIVGLSVYLMGLENLSGPAAVTARIKELATNGVVTNVKGSPNKLAYNGNA</sequence>
<proteinExistence type="inferred from homology"/>
<keyword id="KW-0325">Glycoprotein</keyword>
<keyword id="KW-0378">Hydrolase</keyword>
<keyword id="KW-0645">Protease</keyword>
<keyword id="KW-0964">Secreted</keyword>
<keyword id="KW-0720">Serine protease</keyword>
<keyword id="KW-0732">Signal</keyword>
<keyword id="KW-0843">Virulence</keyword>
<keyword id="KW-0865">Zymogen</keyword>
<comment type="function">
    <text evidence="1">Secreted alkaline protease that allows assimilation of proteinaceous substrates (By similarity). Acts as a significant virulence factor in invasive aspergillosis. Involved in immune evasion from the human and mice complement systems during infection. Efficiently cleaves important components of the complement cascade such as such as C3, C4, C5, and C1q, as well as IgG, which leads to down-regulation of complement activation at the hyphal surface (By similarity).</text>
</comment>
<comment type="catalytic activity">
    <reaction>
        <text>Hydrolysis of proteins with broad specificity, and of Bz-Arg-OEt &gt; Ac-Tyr-OEt. Does not hydrolyze peptide amides.</text>
        <dbReference type="EC" id="3.4.21.63"/>
    </reaction>
</comment>
<comment type="subcellular location">
    <subcellularLocation>
        <location evidence="1">Secreted</location>
    </subcellularLocation>
</comment>
<comment type="similarity">
    <text evidence="4">Belongs to the peptidase S8 family.</text>
</comment>
<name>ORYZ_ASPFC</name>
<feature type="signal peptide" evidence="2">
    <location>
        <begin position="1"/>
        <end position="21"/>
    </location>
</feature>
<feature type="propeptide" id="PRO_0000406994" evidence="1">
    <location>
        <begin position="22"/>
        <end position="125"/>
    </location>
</feature>
<feature type="chain" id="PRO_0000406995" description="Alkaline protease 1">
    <location>
        <begin position="126"/>
        <end position="403"/>
    </location>
</feature>
<feature type="domain" description="Inhibitor I9" evidence="2">
    <location>
        <begin position="36"/>
        <end position="120"/>
    </location>
</feature>
<feature type="domain" description="Peptidase S8" evidence="3">
    <location>
        <begin position="130"/>
        <end position="403"/>
    </location>
</feature>
<feature type="active site" description="Charge relay system" evidence="3">
    <location>
        <position position="162"/>
    </location>
</feature>
<feature type="active site" description="Charge relay system" evidence="3">
    <location>
        <position position="193"/>
    </location>
</feature>
<feature type="active site" description="Charge relay system" evidence="3">
    <location>
        <position position="349"/>
    </location>
</feature>
<feature type="glycosylation site" description="N-linked (GlcNAc...) asparagine" evidence="2">
    <location>
        <position position="253"/>
    </location>
</feature>
<feature type="glycosylation site" description="N-linked (GlcNAc...) asparagine" evidence="2">
    <location>
        <position position="307"/>
    </location>
</feature>
<feature type="glycosylation site" description="N-linked (GlcNAc...) asparagine" evidence="2">
    <location>
        <position position="367"/>
    </location>
</feature>
<organism>
    <name type="scientific">Aspergillus fumigatus (strain CBS 144.89 / FGSC A1163 / CEA10)</name>
    <name type="common">Neosartorya fumigata</name>
    <dbReference type="NCBI Taxonomy" id="451804"/>
    <lineage>
        <taxon>Eukaryota</taxon>
        <taxon>Fungi</taxon>
        <taxon>Dikarya</taxon>
        <taxon>Ascomycota</taxon>
        <taxon>Pezizomycotina</taxon>
        <taxon>Eurotiomycetes</taxon>
        <taxon>Eurotiomycetidae</taxon>
        <taxon>Eurotiales</taxon>
        <taxon>Aspergillaceae</taxon>
        <taxon>Aspergillus</taxon>
        <taxon>Aspergillus subgen. Fumigati</taxon>
    </lineage>
</organism>